<gene>
    <name type="ordered locus">MT2107</name>
</gene>
<dbReference type="EMBL" id="AE000516">
    <property type="protein sequence ID" value="AAK46386.1"/>
    <property type="molecule type" value="Genomic_DNA"/>
</dbReference>
<dbReference type="PIR" id="F70944">
    <property type="entry name" value="F70944"/>
</dbReference>
<dbReference type="RefSeq" id="WP_003410309.1">
    <property type="nucleotide sequence ID" value="NZ_KK341227.1"/>
</dbReference>
<dbReference type="SMR" id="P9WIH4"/>
<dbReference type="KEGG" id="mtc:MT2107"/>
<dbReference type="PATRIC" id="fig|83331.31.peg.2272"/>
<dbReference type="HOGENOM" id="CLU_016376_0_0_11"/>
<dbReference type="Proteomes" id="UP000001020">
    <property type="component" value="Chromosome"/>
</dbReference>
<dbReference type="GO" id="GO:0016772">
    <property type="term" value="F:transferase activity, transferring phosphorus-containing groups"/>
    <property type="evidence" value="ECO:0007669"/>
    <property type="project" value="InterPro"/>
</dbReference>
<dbReference type="FunFam" id="3.50.30.10:FF:000006">
    <property type="entry name" value="UDP-glucose 4-epimerase GalE4"/>
    <property type="match status" value="1"/>
</dbReference>
<dbReference type="Gene3D" id="3.40.50.720">
    <property type="entry name" value="NAD(P)-binding Rossmann-like Domain"/>
    <property type="match status" value="1"/>
</dbReference>
<dbReference type="Gene3D" id="3.50.30.10">
    <property type="entry name" value="Phosphohistidine domain"/>
    <property type="match status" value="1"/>
</dbReference>
<dbReference type="InterPro" id="IPR001509">
    <property type="entry name" value="Epimerase_deHydtase"/>
</dbReference>
<dbReference type="InterPro" id="IPR036291">
    <property type="entry name" value="NAD(P)-bd_dom_sf"/>
</dbReference>
<dbReference type="InterPro" id="IPR008279">
    <property type="entry name" value="PEP-util_enz_mobile_dom"/>
</dbReference>
<dbReference type="InterPro" id="IPR051549">
    <property type="entry name" value="PEP_Utilizing_Enz"/>
</dbReference>
<dbReference type="InterPro" id="IPR036637">
    <property type="entry name" value="Phosphohistidine_dom_sf"/>
</dbReference>
<dbReference type="NCBIfam" id="NF004520">
    <property type="entry name" value="PRK05865.1"/>
    <property type="match status" value="1"/>
</dbReference>
<dbReference type="PANTHER" id="PTHR43615">
    <property type="entry name" value="PHOSPHOENOLPYRUVATE SYNTHASE-RELATED"/>
    <property type="match status" value="1"/>
</dbReference>
<dbReference type="PANTHER" id="PTHR43615:SF1">
    <property type="entry name" value="PPDK_N DOMAIN-CONTAINING PROTEIN"/>
    <property type="match status" value="1"/>
</dbReference>
<dbReference type="Pfam" id="PF01370">
    <property type="entry name" value="Epimerase"/>
    <property type="match status" value="1"/>
</dbReference>
<dbReference type="Pfam" id="PF00391">
    <property type="entry name" value="PEP-utilizers"/>
    <property type="match status" value="1"/>
</dbReference>
<dbReference type="SUPFAM" id="SSF51735">
    <property type="entry name" value="NAD(P)-binding Rossmann-fold domains"/>
    <property type="match status" value="1"/>
</dbReference>
<dbReference type="SUPFAM" id="SSF52009">
    <property type="entry name" value="Phosphohistidine domain"/>
    <property type="match status" value="1"/>
</dbReference>
<sequence length="854" mass="91385">MRIAVTGASGVLGRGLTARLLSQGHEVVGIARHRPDSWPSSADFIAADIRDATAVESAMTGADVVAHCAWVRGRNDHINIDGTANVLKAMAETGTGRIVFTSSGHQPRVEQMLADCGLEWVAVRCALIFGRNVDNWVQRLFALPVLPAGYADRVVQVVHSDDAQRLLVRALLDTVIDSGPVNLAAPGELTFRRIAAALGRPMVPIGSPVLRRVTSFAELELLHSAPLMDVTLLRDRWGFQPAWNAEECLEDFTLAVRGRIGLGKRTFSLPWRLANIQDLPAVDSPADDGVAPRLAGPEGANGEFDTPIDPRFPTYLATNLSEALPGPFSPSSASVTVRGLRAGGVGIAERLRPSGVIQREIAMRTVAVFAHRLYGAITSAHFMAATVPFAKPATIVSNSGFFGPSMASLPIFGAQRPPSESSRARRWLRTLRNIGVFGVNLVGLSAGSPRDTDAYVADVDRLERLAFDNLATHDDRRLLSLILLARDHVVHGWVLASGSFMLCAAFNVLLRGLCGRDTAPAAGPELVSARSVEAVQRLVAAARRDPVVIRLLAEPGERLDKLAVEAPEFHSAVLAELTLIGHRGPAEVEMAATSYADNPELLVRMVAKTLRAVPAPQPPTPVIPLRAKPVALLAARQLRDREVRRDRMVRAIWVLRALLREYGRRLTEAGVFDTPDDVFYLLVDEIDALPADVSGLVARRRAEQRRLAGIVPPTVFSGSWEPSPSSAAALAAGDTLRGVGVCGGRVRGRVRIVRPETIDDLQPGEILVAEVTDVGYTAAFCYAAAVVTELGGPMSHAAVVAREFGFPCVVDAQGATRFLPPGALVEVDGATGEIHVVELASEDGPALPGSDLSR</sequence>
<comment type="similarity">
    <text evidence="1">Belongs to the PEP-utilizing enzyme family.</text>
</comment>
<keyword id="KW-1185">Reference proteome</keyword>
<protein>
    <recommendedName>
        <fullName>Uncharacterized protein MT2107</fullName>
    </recommendedName>
</protein>
<reference key="1">
    <citation type="journal article" date="2002" name="J. Bacteriol.">
        <title>Whole-genome comparison of Mycobacterium tuberculosis clinical and laboratory strains.</title>
        <authorList>
            <person name="Fleischmann R.D."/>
            <person name="Alland D."/>
            <person name="Eisen J.A."/>
            <person name="Carpenter L."/>
            <person name="White O."/>
            <person name="Peterson J.D."/>
            <person name="DeBoy R.T."/>
            <person name="Dodson R.J."/>
            <person name="Gwinn M.L."/>
            <person name="Haft D.H."/>
            <person name="Hickey E.K."/>
            <person name="Kolonay J.F."/>
            <person name="Nelson W.C."/>
            <person name="Umayam L.A."/>
            <person name="Ermolaeva M.D."/>
            <person name="Salzberg S.L."/>
            <person name="Delcher A."/>
            <person name="Utterback T.R."/>
            <person name="Weidman J.F."/>
            <person name="Khouri H.M."/>
            <person name="Gill J."/>
            <person name="Mikula A."/>
            <person name="Bishai W."/>
            <person name="Jacobs W.R. Jr."/>
            <person name="Venter J.C."/>
            <person name="Fraser C.M."/>
        </authorList>
    </citation>
    <scope>NUCLEOTIDE SEQUENCE [LARGE SCALE GENOMIC DNA]</scope>
    <source>
        <strain>CDC 1551 / Oshkosh</strain>
    </source>
</reference>
<proteinExistence type="inferred from homology"/>
<evidence type="ECO:0000305" key="1"/>
<feature type="chain" id="PRO_0000428006" description="Uncharacterized protein MT2107">
    <location>
        <begin position="1"/>
        <end position="854"/>
    </location>
</feature>
<name>Y2047_MYCTO</name>
<organism>
    <name type="scientific">Mycobacterium tuberculosis (strain CDC 1551 / Oshkosh)</name>
    <dbReference type="NCBI Taxonomy" id="83331"/>
    <lineage>
        <taxon>Bacteria</taxon>
        <taxon>Bacillati</taxon>
        <taxon>Actinomycetota</taxon>
        <taxon>Actinomycetes</taxon>
        <taxon>Mycobacteriales</taxon>
        <taxon>Mycobacteriaceae</taxon>
        <taxon>Mycobacterium</taxon>
        <taxon>Mycobacterium tuberculosis complex</taxon>
    </lineage>
</organism>
<accession>P9WIH4</accession>
<accession>L0TB71</accession>
<accession>P65684</accession>
<accession>Q93IG5</accession>